<gene>
    <name evidence="1" type="primary">acpS</name>
    <name type="ordered locus">Rleg2_0996</name>
</gene>
<dbReference type="EC" id="2.7.8.7" evidence="1"/>
<dbReference type="EMBL" id="CP001191">
    <property type="protein sequence ID" value="ACI54290.1"/>
    <property type="molecule type" value="Genomic_DNA"/>
</dbReference>
<dbReference type="RefSeq" id="WP_003587592.1">
    <property type="nucleotide sequence ID" value="NC_011369.1"/>
</dbReference>
<dbReference type="SMR" id="B5ZW71"/>
<dbReference type="STRING" id="395492.Rleg2_0996"/>
<dbReference type="KEGG" id="rlt:Rleg2_0996"/>
<dbReference type="eggNOG" id="COG0736">
    <property type="taxonomic scope" value="Bacteria"/>
</dbReference>
<dbReference type="HOGENOM" id="CLU_089696_0_2_5"/>
<dbReference type="Proteomes" id="UP000008330">
    <property type="component" value="Chromosome"/>
</dbReference>
<dbReference type="GO" id="GO:0005737">
    <property type="term" value="C:cytoplasm"/>
    <property type="evidence" value="ECO:0007669"/>
    <property type="project" value="UniProtKB-SubCell"/>
</dbReference>
<dbReference type="GO" id="GO:0008897">
    <property type="term" value="F:holo-[acyl-carrier-protein] synthase activity"/>
    <property type="evidence" value="ECO:0007669"/>
    <property type="project" value="UniProtKB-UniRule"/>
</dbReference>
<dbReference type="GO" id="GO:0000287">
    <property type="term" value="F:magnesium ion binding"/>
    <property type="evidence" value="ECO:0007669"/>
    <property type="project" value="UniProtKB-UniRule"/>
</dbReference>
<dbReference type="GO" id="GO:0006633">
    <property type="term" value="P:fatty acid biosynthetic process"/>
    <property type="evidence" value="ECO:0007669"/>
    <property type="project" value="UniProtKB-UniRule"/>
</dbReference>
<dbReference type="Gene3D" id="3.90.470.20">
    <property type="entry name" value="4'-phosphopantetheinyl transferase domain"/>
    <property type="match status" value="1"/>
</dbReference>
<dbReference type="HAMAP" id="MF_00101">
    <property type="entry name" value="AcpS"/>
    <property type="match status" value="1"/>
</dbReference>
<dbReference type="InterPro" id="IPR008278">
    <property type="entry name" value="4-PPantetheinyl_Trfase_dom"/>
</dbReference>
<dbReference type="InterPro" id="IPR037143">
    <property type="entry name" value="4-PPantetheinyl_Trfase_dom_sf"/>
</dbReference>
<dbReference type="InterPro" id="IPR002582">
    <property type="entry name" value="ACPS"/>
</dbReference>
<dbReference type="InterPro" id="IPR004568">
    <property type="entry name" value="Ppantetheine-prot_Trfase_dom"/>
</dbReference>
<dbReference type="NCBIfam" id="TIGR00516">
    <property type="entry name" value="acpS"/>
    <property type="match status" value="1"/>
</dbReference>
<dbReference type="NCBIfam" id="TIGR00556">
    <property type="entry name" value="pantethn_trn"/>
    <property type="match status" value="1"/>
</dbReference>
<dbReference type="Pfam" id="PF01648">
    <property type="entry name" value="ACPS"/>
    <property type="match status" value="1"/>
</dbReference>
<dbReference type="SUPFAM" id="SSF56214">
    <property type="entry name" value="4'-phosphopantetheinyl transferase"/>
    <property type="match status" value="1"/>
</dbReference>
<accession>B5ZW71</accession>
<name>ACPS_RHILW</name>
<keyword id="KW-0963">Cytoplasm</keyword>
<keyword id="KW-0275">Fatty acid biosynthesis</keyword>
<keyword id="KW-0276">Fatty acid metabolism</keyword>
<keyword id="KW-0444">Lipid biosynthesis</keyword>
<keyword id="KW-0443">Lipid metabolism</keyword>
<keyword id="KW-0460">Magnesium</keyword>
<keyword id="KW-0479">Metal-binding</keyword>
<keyword id="KW-1185">Reference proteome</keyword>
<keyword id="KW-0808">Transferase</keyword>
<comment type="function">
    <text evidence="1">Transfers the 4'-phosphopantetheine moiety from coenzyme A to a Ser of acyl-carrier-protein.</text>
</comment>
<comment type="catalytic activity">
    <reaction evidence="1">
        <text>apo-[ACP] + CoA = holo-[ACP] + adenosine 3',5'-bisphosphate + H(+)</text>
        <dbReference type="Rhea" id="RHEA:12068"/>
        <dbReference type="Rhea" id="RHEA-COMP:9685"/>
        <dbReference type="Rhea" id="RHEA-COMP:9690"/>
        <dbReference type="ChEBI" id="CHEBI:15378"/>
        <dbReference type="ChEBI" id="CHEBI:29999"/>
        <dbReference type="ChEBI" id="CHEBI:57287"/>
        <dbReference type="ChEBI" id="CHEBI:58343"/>
        <dbReference type="ChEBI" id="CHEBI:64479"/>
        <dbReference type="EC" id="2.7.8.7"/>
    </reaction>
</comment>
<comment type="cofactor">
    <cofactor evidence="1">
        <name>Mg(2+)</name>
        <dbReference type="ChEBI" id="CHEBI:18420"/>
    </cofactor>
</comment>
<comment type="subcellular location">
    <subcellularLocation>
        <location evidence="1">Cytoplasm</location>
    </subcellularLocation>
</comment>
<comment type="similarity">
    <text evidence="1">Belongs to the P-Pant transferase superfamily. AcpS family.</text>
</comment>
<sequence>MIIGIGSDLIDIRRVEKSIERFGDRFTHRCFTEIERARSDRRANRGASYAKRFAAKEACSKALGTGIAQGVFWKDMGVVNLPSGKPTMVLSGAAALILESMLPAGHRPAIHLTITDDYPLAQAFVIIEALPESL</sequence>
<proteinExistence type="inferred from homology"/>
<organism>
    <name type="scientific">Rhizobium leguminosarum bv. trifolii (strain WSM2304)</name>
    <dbReference type="NCBI Taxonomy" id="395492"/>
    <lineage>
        <taxon>Bacteria</taxon>
        <taxon>Pseudomonadati</taxon>
        <taxon>Pseudomonadota</taxon>
        <taxon>Alphaproteobacteria</taxon>
        <taxon>Hyphomicrobiales</taxon>
        <taxon>Rhizobiaceae</taxon>
        <taxon>Rhizobium/Agrobacterium group</taxon>
        <taxon>Rhizobium</taxon>
    </lineage>
</organism>
<evidence type="ECO:0000255" key="1">
    <source>
        <dbReference type="HAMAP-Rule" id="MF_00101"/>
    </source>
</evidence>
<feature type="chain" id="PRO_1000093907" description="Holo-[acyl-carrier-protein] synthase">
    <location>
        <begin position="1"/>
        <end position="134"/>
    </location>
</feature>
<feature type="binding site" evidence="1">
    <location>
        <position position="8"/>
    </location>
    <ligand>
        <name>Mg(2+)</name>
        <dbReference type="ChEBI" id="CHEBI:18420"/>
    </ligand>
</feature>
<feature type="binding site" evidence="1">
    <location>
        <position position="57"/>
    </location>
    <ligand>
        <name>Mg(2+)</name>
        <dbReference type="ChEBI" id="CHEBI:18420"/>
    </ligand>
</feature>
<reference key="1">
    <citation type="journal article" date="2010" name="Stand. Genomic Sci.">
        <title>Complete genome sequence of Rhizobium leguminosarum bv trifolii strain WSM2304, an effective microsymbiont of the South American clover Trifolium polymorphum.</title>
        <authorList>
            <person name="Reeve W."/>
            <person name="O'Hara G."/>
            <person name="Chain P."/>
            <person name="Ardley J."/>
            <person name="Brau L."/>
            <person name="Nandesena K."/>
            <person name="Tiwari R."/>
            <person name="Malfatti S."/>
            <person name="Kiss H."/>
            <person name="Lapidus A."/>
            <person name="Copeland A."/>
            <person name="Nolan M."/>
            <person name="Land M."/>
            <person name="Ivanova N."/>
            <person name="Mavromatis K."/>
            <person name="Markowitz V."/>
            <person name="Kyrpides N."/>
            <person name="Melino V."/>
            <person name="Denton M."/>
            <person name="Yates R."/>
            <person name="Howieson J."/>
        </authorList>
    </citation>
    <scope>NUCLEOTIDE SEQUENCE [LARGE SCALE GENOMIC DNA]</scope>
    <source>
        <strain>WSM2304</strain>
    </source>
</reference>
<protein>
    <recommendedName>
        <fullName evidence="1">Holo-[acyl-carrier-protein] synthase</fullName>
        <shortName evidence="1">Holo-ACP synthase</shortName>
        <ecNumber evidence="1">2.7.8.7</ecNumber>
    </recommendedName>
    <alternativeName>
        <fullName evidence="1">4'-phosphopantetheinyl transferase AcpS</fullName>
    </alternativeName>
</protein>